<sequence>MDTFSTKNLALQAQKKLLSKMASKTVANVFIDDTSSEILDELYRATKEYTHNRKEAQKIIKNLIKIVMKLGVLYRNGQFSPEELLVMERFRKKVHTLAMTAVSFHQIDFTFDRRVVSSVLTECRDLLHQAVSSHLTAKSHSRINHVFNHFADYEFLSALYGPAEPYRTHLKRICEGVNKMLEEDNI</sequence>
<name>TP8L1_CHICK</name>
<organism>
    <name type="scientific">Gallus gallus</name>
    <name type="common">Chicken</name>
    <dbReference type="NCBI Taxonomy" id="9031"/>
    <lineage>
        <taxon>Eukaryota</taxon>
        <taxon>Metazoa</taxon>
        <taxon>Chordata</taxon>
        <taxon>Craniata</taxon>
        <taxon>Vertebrata</taxon>
        <taxon>Euteleostomi</taxon>
        <taxon>Archelosauria</taxon>
        <taxon>Archosauria</taxon>
        <taxon>Dinosauria</taxon>
        <taxon>Saurischia</taxon>
        <taxon>Theropoda</taxon>
        <taxon>Coelurosauria</taxon>
        <taxon>Aves</taxon>
        <taxon>Neognathae</taxon>
        <taxon>Galloanserae</taxon>
        <taxon>Galliformes</taxon>
        <taxon>Phasianidae</taxon>
        <taxon>Phasianinae</taxon>
        <taxon>Gallus</taxon>
    </lineage>
</organism>
<dbReference type="EMBL" id="AJ720336">
    <property type="protein sequence ID" value="CAG31995.1"/>
    <property type="molecule type" value="mRNA"/>
</dbReference>
<dbReference type="RefSeq" id="NP_001006343.1">
    <property type="nucleotide sequence ID" value="NM_001006343.1"/>
</dbReference>
<dbReference type="SMR" id="Q5ZJU8"/>
<dbReference type="FunCoup" id="Q5ZJU8">
    <property type="interactions" value="1446"/>
</dbReference>
<dbReference type="PaxDb" id="9031-ENSGALP00000006772"/>
<dbReference type="GeneID" id="420162"/>
<dbReference type="KEGG" id="gga:420162"/>
<dbReference type="CTD" id="126282"/>
<dbReference type="VEuPathDB" id="HostDB:geneid_420162"/>
<dbReference type="eggNOG" id="ENOG502S00N">
    <property type="taxonomic scope" value="Eukaryota"/>
</dbReference>
<dbReference type="InParanoid" id="Q5ZJU8"/>
<dbReference type="OrthoDB" id="10055976at2759"/>
<dbReference type="PhylomeDB" id="Q5ZJU8"/>
<dbReference type="PRO" id="PR:Q5ZJU8"/>
<dbReference type="Proteomes" id="UP000000539">
    <property type="component" value="Unassembled WGS sequence"/>
</dbReference>
<dbReference type="GO" id="GO:0005737">
    <property type="term" value="C:cytoplasm"/>
    <property type="evidence" value="ECO:0000250"/>
    <property type="project" value="UniProtKB"/>
</dbReference>
<dbReference type="GO" id="GO:0032007">
    <property type="term" value="P:negative regulation of TOR signaling"/>
    <property type="evidence" value="ECO:0000250"/>
    <property type="project" value="UniProtKB"/>
</dbReference>
<dbReference type="GO" id="GO:0042981">
    <property type="term" value="P:regulation of apoptotic process"/>
    <property type="evidence" value="ECO:0007669"/>
    <property type="project" value="InterPro"/>
</dbReference>
<dbReference type="FunFam" id="1.20.1440.160:FF:000001">
    <property type="entry name" value="Tumor necrosis factor alpha-induced protein 8-like 1"/>
    <property type="match status" value="1"/>
</dbReference>
<dbReference type="Gene3D" id="1.20.1440.160">
    <property type="entry name" value="Tumor necrosis factor alpha-induced protein 8-like"/>
    <property type="match status" value="1"/>
</dbReference>
<dbReference type="InterPro" id="IPR008477">
    <property type="entry name" value="TNFAIP8-like"/>
</dbReference>
<dbReference type="InterPro" id="IPR038355">
    <property type="entry name" value="TNFAIP8_sf"/>
</dbReference>
<dbReference type="PANTHER" id="PTHR12757:SF2">
    <property type="entry name" value="TUMOR NECROSIS FACTOR ALPHA-INDUCED PROTEIN 8-LIKE PROTEIN 1"/>
    <property type="match status" value="1"/>
</dbReference>
<dbReference type="PANTHER" id="PTHR12757">
    <property type="entry name" value="TUMOR NECROSIS FACTOR INDUCED PROTEIN"/>
    <property type="match status" value="1"/>
</dbReference>
<dbReference type="Pfam" id="PF05527">
    <property type="entry name" value="DUF758"/>
    <property type="match status" value="1"/>
</dbReference>
<gene>
    <name type="primary">TNFAIP8L1</name>
    <name type="ORF">RCJMB04_15i14</name>
</gene>
<proteinExistence type="evidence at transcript level"/>
<keyword id="KW-0963">Cytoplasm</keyword>
<keyword id="KW-1185">Reference proteome</keyword>
<protein>
    <recommendedName>
        <fullName>Tumor necrosis factor alpha-induced protein 8-like protein 1</fullName>
        <shortName evidence="1">TIPE1</shortName>
        <shortName>TNF alpha-induced protein 8-like protein 1</shortName>
        <shortName>TNFAIP8-like protein 1</shortName>
    </recommendedName>
</protein>
<feature type="chain" id="PRO_0000285726" description="Tumor necrosis factor alpha-induced protein 8-like protein 1">
    <location>
        <begin position="1"/>
        <end position="186"/>
    </location>
</feature>
<accession>Q5ZJU8</accession>
<reference key="1">
    <citation type="journal article" date="2005" name="Genome Biol.">
        <title>Full-length cDNAs from chicken bursal lymphocytes to facilitate gene function analysis.</title>
        <authorList>
            <person name="Caldwell R.B."/>
            <person name="Kierzek A.M."/>
            <person name="Arakawa H."/>
            <person name="Bezzubov Y."/>
            <person name="Zaim J."/>
            <person name="Fiedler P."/>
            <person name="Kutter S."/>
            <person name="Blagodatski A."/>
            <person name="Kostovska D."/>
            <person name="Koter M."/>
            <person name="Plachy J."/>
            <person name="Carninci P."/>
            <person name="Hayashizaki Y."/>
            <person name="Buerstedde J.-M."/>
        </authorList>
    </citation>
    <scope>NUCLEOTIDE SEQUENCE [LARGE SCALE MRNA]</scope>
    <source>
        <strain>CB</strain>
        <tissue>Bursa of Fabricius</tissue>
    </source>
</reference>
<comment type="subcellular location">
    <subcellularLocation>
        <location evidence="1">Cytoplasm</location>
    </subcellularLocation>
</comment>
<comment type="similarity">
    <text evidence="2">Belongs to the TNFAIP8 family.</text>
</comment>
<evidence type="ECO:0000250" key="1">
    <source>
        <dbReference type="UniProtKB" id="Q8K288"/>
    </source>
</evidence>
<evidence type="ECO:0000305" key="2"/>